<gene>
    <name evidence="1" type="primary">queA</name>
    <name type="ordered locus">syc1755_c</name>
</gene>
<accession>Q5N175</accession>
<sequence>MNEPSPSDWHLDAYDYELPPDRIAQSAVEPRDHARLSVFPDREQLWHRHFYDLPQLLRPGDLLIVNDTRVIPARLYGQKIETGVPVEVLLVEEHGPGYWLTLVKPGKRLKPGSAIAFGPNPEDPLLVADVEASDPATGGRWLRFRGEAEAFWSQLATLGEMPLPPYIHTTASDPERYQTVYSRELGAVAAPTAGLHFTPELLTTLADMGIATAPVTLHVGIGTFRSVDVEDIRQHEMHSERMMVPAATVEKIQATKAAGGRVIAVGTTSVRAIEGAAASGELKPGSDRVNLFIYPGYRWQIIDGLITNFHLPRSSLMMLVSALIGRDRLLSAYATAIAEQYRFYSFGDAMLILPDAKLP</sequence>
<comment type="function">
    <text evidence="1">Transfers and isomerizes the ribose moiety from AdoMet to the 7-aminomethyl group of 7-deazaguanine (preQ1-tRNA) to give epoxyqueuosine (oQ-tRNA).</text>
</comment>
<comment type="catalytic activity">
    <reaction evidence="1">
        <text>7-aminomethyl-7-carbaguanosine(34) in tRNA + S-adenosyl-L-methionine = epoxyqueuosine(34) in tRNA + adenine + L-methionine + 2 H(+)</text>
        <dbReference type="Rhea" id="RHEA:32155"/>
        <dbReference type="Rhea" id="RHEA-COMP:10342"/>
        <dbReference type="Rhea" id="RHEA-COMP:18582"/>
        <dbReference type="ChEBI" id="CHEBI:15378"/>
        <dbReference type="ChEBI" id="CHEBI:16708"/>
        <dbReference type="ChEBI" id="CHEBI:57844"/>
        <dbReference type="ChEBI" id="CHEBI:59789"/>
        <dbReference type="ChEBI" id="CHEBI:82833"/>
        <dbReference type="ChEBI" id="CHEBI:194443"/>
        <dbReference type="EC" id="2.4.99.17"/>
    </reaction>
</comment>
<comment type="pathway">
    <text evidence="1">tRNA modification; tRNA-queuosine biosynthesis.</text>
</comment>
<comment type="subunit">
    <text evidence="1">Monomer.</text>
</comment>
<comment type="subcellular location">
    <subcellularLocation>
        <location evidence="1">Cytoplasm</location>
    </subcellularLocation>
</comment>
<comment type="similarity">
    <text evidence="1">Belongs to the QueA family.</text>
</comment>
<evidence type="ECO:0000255" key="1">
    <source>
        <dbReference type="HAMAP-Rule" id="MF_00113"/>
    </source>
</evidence>
<protein>
    <recommendedName>
        <fullName evidence="1">S-adenosylmethionine:tRNA ribosyltransferase-isomerase</fullName>
        <ecNumber evidence="1">2.4.99.17</ecNumber>
    </recommendedName>
    <alternativeName>
        <fullName evidence="1">Queuosine biosynthesis protein QueA</fullName>
    </alternativeName>
</protein>
<keyword id="KW-0963">Cytoplasm</keyword>
<keyword id="KW-0671">Queuosine biosynthesis</keyword>
<keyword id="KW-0949">S-adenosyl-L-methionine</keyword>
<keyword id="KW-0808">Transferase</keyword>
<reference key="1">
    <citation type="journal article" date="2007" name="Photosyn. Res.">
        <title>Complete nucleotide sequence of the freshwater unicellular cyanobacterium Synechococcus elongatus PCC 6301 chromosome: gene content and organization.</title>
        <authorList>
            <person name="Sugita C."/>
            <person name="Ogata K."/>
            <person name="Shikata M."/>
            <person name="Jikuya H."/>
            <person name="Takano J."/>
            <person name="Furumichi M."/>
            <person name="Kanehisa M."/>
            <person name="Omata T."/>
            <person name="Sugiura M."/>
            <person name="Sugita M."/>
        </authorList>
    </citation>
    <scope>NUCLEOTIDE SEQUENCE [LARGE SCALE GENOMIC DNA]</scope>
    <source>
        <strain>ATCC 27144 / PCC 6301 / SAUG 1402/1</strain>
    </source>
</reference>
<proteinExistence type="inferred from homology"/>
<organism>
    <name type="scientific">Synechococcus sp. (strain ATCC 27144 / PCC 6301 / SAUG 1402/1)</name>
    <name type="common">Anacystis nidulans</name>
    <dbReference type="NCBI Taxonomy" id="269084"/>
    <lineage>
        <taxon>Bacteria</taxon>
        <taxon>Bacillati</taxon>
        <taxon>Cyanobacteriota</taxon>
        <taxon>Cyanophyceae</taxon>
        <taxon>Synechococcales</taxon>
        <taxon>Synechococcaceae</taxon>
        <taxon>Synechococcus</taxon>
    </lineage>
</organism>
<name>QUEA_SYNP6</name>
<dbReference type="EC" id="2.4.99.17" evidence="1"/>
<dbReference type="EMBL" id="AP008231">
    <property type="protein sequence ID" value="BAD79945.1"/>
    <property type="molecule type" value="Genomic_DNA"/>
</dbReference>
<dbReference type="RefSeq" id="WP_011244065.1">
    <property type="nucleotide sequence ID" value="NC_006576.1"/>
</dbReference>
<dbReference type="SMR" id="Q5N175"/>
<dbReference type="KEGG" id="syc:syc1755_c"/>
<dbReference type="eggNOG" id="COG0809">
    <property type="taxonomic scope" value="Bacteria"/>
</dbReference>
<dbReference type="UniPathway" id="UPA00392"/>
<dbReference type="Proteomes" id="UP000001175">
    <property type="component" value="Chromosome"/>
</dbReference>
<dbReference type="GO" id="GO:0005737">
    <property type="term" value="C:cytoplasm"/>
    <property type="evidence" value="ECO:0007669"/>
    <property type="project" value="UniProtKB-SubCell"/>
</dbReference>
<dbReference type="GO" id="GO:0051075">
    <property type="term" value="F:S-adenosylmethionine:tRNA ribosyltransferase-isomerase activity"/>
    <property type="evidence" value="ECO:0007669"/>
    <property type="project" value="UniProtKB-EC"/>
</dbReference>
<dbReference type="GO" id="GO:0008616">
    <property type="term" value="P:queuosine biosynthetic process"/>
    <property type="evidence" value="ECO:0007669"/>
    <property type="project" value="UniProtKB-UniRule"/>
</dbReference>
<dbReference type="GO" id="GO:0002099">
    <property type="term" value="P:tRNA wobble guanine modification"/>
    <property type="evidence" value="ECO:0007669"/>
    <property type="project" value="TreeGrafter"/>
</dbReference>
<dbReference type="FunFam" id="2.40.10.240:FF:000002">
    <property type="entry name" value="S-adenosylmethionine:tRNA ribosyltransferase-isomerase"/>
    <property type="match status" value="1"/>
</dbReference>
<dbReference type="FunFam" id="3.40.1780.10:FF:000001">
    <property type="entry name" value="S-adenosylmethionine:tRNA ribosyltransferase-isomerase"/>
    <property type="match status" value="1"/>
</dbReference>
<dbReference type="Gene3D" id="2.40.10.240">
    <property type="entry name" value="QueA-like"/>
    <property type="match status" value="1"/>
</dbReference>
<dbReference type="Gene3D" id="3.40.1780.10">
    <property type="entry name" value="QueA-like"/>
    <property type="match status" value="1"/>
</dbReference>
<dbReference type="HAMAP" id="MF_00113">
    <property type="entry name" value="QueA"/>
    <property type="match status" value="1"/>
</dbReference>
<dbReference type="InterPro" id="IPR003699">
    <property type="entry name" value="QueA"/>
</dbReference>
<dbReference type="InterPro" id="IPR042118">
    <property type="entry name" value="QueA_dom1"/>
</dbReference>
<dbReference type="InterPro" id="IPR042119">
    <property type="entry name" value="QueA_dom2"/>
</dbReference>
<dbReference type="InterPro" id="IPR036100">
    <property type="entry name" value="QueA_sf"/>
</dbReference>
<dbReference type="NCBIfam" id="NF001140">
    <property type="entry name" value="PRK00147.1"/>
    <property type="match status" value="1"/>
</dbReference>
<dbReference type="NCBIfam" id="TIGR00113">
    <property type="entry name" value="queA"/>
    <property type="match status" value="1"/>
</dbReference>
<dbReference type="PANTHER" id="PTHR30307">
    <property type="entry name" value="S-ADENOSYLMETHIONINE:TRNA RIBOSYLTRANSFERASE-ISOMERASE"/>
    <property type="match status" value="1"/>
</dbReference>
<dbReference type="PANTHER" id="PTHR30307:SF0">
    <property type="entry name" value="S-ADENOSYLMETHIONINE:TRNA RIBOSYLTRANSFERASE-ISOMERASE"/>
    <property type="match status" value="1"/>
</dbReference>
<dbReference type="Pfam" id="PF02547">
    <property type="entry name" value="Queuosine_synth"/>
    <property type="match status" value="1"/>
</dbReference>
<dbReference type="SUPFAM" id="SSF111337">
    <property type="entry name" value="QueA-like"/>
    <property type="match status" value="1"/>
</dbReference>
<feature type="chain" id="PRO_0000231383" description="S-adenosylmethionine:tRNA ribosyltransferase-isomerase">
    <location>
        <begin position="1"/>
        <end position="359"/>
    </location>
</feature>